<name>T2EB_XENLA</name>
<feature type="chain" id="PRO_0000211228" description="General transcription factor IIE subunit 2">
    <location>
        <begin position="1"/>
        <end position="288"/>
    </location>
</feature>
<feature type="DNA-binding region" description="TFIIE beta" evidence="2">
    <location>
        <begin position="63"/>
        <end position="143"/>
    </location>
</feature>
<feature type="region of interest" description="Disordered" evidence="3">
    <location>
        <begin position="16"/>
        <end position="56"/>
    </location>
</feature>
<feature type="compositionally biased region" description="Low complexity" evidence="3">
    <location>
        <begin position="41"/>
        <end position="56"/>
    </location>
</feature>
<sequence length="288" mass="32624">MDPALLRDRELFKKRALTTPAVEKRPSASSESSKKKRAKLELSSTSGSKPSSDGSNGSFNLKSLSGSSGYKFGVLAKIVNYMKTRHQRGDTYPLTLEEILDETQHLDIGIKQKQWLMSEALVNNPKIEIIDGKYAFKPKYNLKDKKALLRLLDKHDQRGLGGILLEDIEEGLPNAQKAIKALGDQIVFVTRPDKKKILFYNDKSCQFTVDEEFQKLWRSVPVDSMDDEKIEEYLKRQGISSMQESGPKKIIPVQKRKKATSQRRRFKTHNDHLAGVLKDYTDVASGKP</sequence>
<gene>
    <name type="primary">gtf2e2</name>
</gene>
<keyword id="KW-0238">DNA-binding</keyword>
<keyword id="KW-0539">Nucleus</keyword>
<keyword id="KW-1185">Reference proteome</keyword>
<keyword id="KW-0804">Transcription</keyword>
<keyword id="KW-0805">Transcription regulation</keyword>
<dbReference type="EMBL" id="Z12595">
    <property type="protein sequence ID" value="CAA78245.1"/>
    <property type="molecule type" value="Genomic_DNA"/>
</dbReference>
<dbReference type="EMBL" id="BC089287">
    <property type="protein sequence ID" value="AAH89287.1"/>
    <property type="molecule type" value="mRNA"/>
</dbReference>
<dbReference type="PIR" id="S26495">
    <property type="entry name" value="S26495"/>
</dbReference>
<dbReference type="RefSeq" id="NP_001089256.1">
    <property type="nucleotide sequence ID" value="NM_001095787.1"/>
</dbReference>
<dbReference type="SMR" id="P29540"/>
<dbReference type="BioGRID" id="592084">
    <property type="interactions" value="1"/>
</dbReference>
<dbReference type="IntAct" id="P29540">
    <property type="interactions" value="1"/>
</dbReference>
<dbReference type="DNASU" id="734303"/>
<dbReference type="AGR" id="Xenbase:XB-GENE-962390"/>
<dbReference type="Xenbase" id="XB-GENE-962390">
    <property type="gene designation" value="gtf2e2.L"/>
</dbReference>
<dbReference type="OMA" id="AFKRRAM"/>
<dbReference type="OrthoDB" id="5323195at2759"/>
<dbReference type="Proteomes" id="UP000186698">
    <property type="component" value="Unplaced"/>
</dbReference>
<dbReference type="Bgee" id="734303">
    <property type="expression patterns" value="Expressed in egg cell and 19 other cell types or tissues"/>
</dbReference>
<dbReference type="GO" id="GO:0005673">
    <property type="term" value="C:transcription factor TFIIE complex"/>
    <property type="evidence" value="ECO:0000318"/>
    <property type="project" value="GO_Central"/>
</dbReference>
<dbReference type="GO" id="GO:0003677">
    <property type="term" value="F:DNA binding"/>
    <property type="evidence" value="ECO:0007669"/>
    <property type="project" value="UniProtKB-KW"/>
</dbReference>
<dbReference type="GO" id="GO:0001097">
    <property type="term" value="F:TFIIH-class transcription factor complex binding"/>
    <property type="evidence" value="ECO:0007669"/>
    <property type="project" value="TreeGrafter"/>
</dbReference>
<dbReference type="GO" id="GO:0006367">
    <property type="term" value="P:transcription initiation at RNA polymerase II promoter"/>
    <property type="evidence" value="ECO:0000318"/>
    <property type="project" value="GO_Central"/>
</dbReference>
<dbReference type="CDD" id="cd07977">
    <property type="entry name" value="TFIIE_beta_winged_helix"/>
    <property type="match status" value="1"/>
</dbReference>
<dbReference type="FunFam" id="1.10.10.10:FF:000177">
    <property type="entry name" value="Transcription initiation factor IIE subunit beta"/>
    <property type="match status" value="1"/>
</dbReference>
<dbReference type="Gene3D" id="1.10.10.10">
    <property type="entry name" value="Winged helix-like DNA-binding domain superfamily/Winged helix DNA-binding domain"/>
    <property type="match status" value="1"/>
</dbReference>
<dbReference type="InterPro" id="IPR040501">
    <property type="entry name" value="TFA2_Winged_2"/>
</dbReference>
<dbReference type="InterPro" id="IPR016656">
    <property type="entry name" value="TFIIE-bsu"/>
</dbReference>
<dbReference type="InterPro" id="IPR003166">
    <property type="entry name" value="TFIIE_bsu_DNA-bd"/>
</dbReference>
<dbReference type="InterPro" id="IPR036388">
    <property type="entry name" value="WH-like_DNA-bd_sf"/>
</dbReference>
<dbReference type="InterPro" id="IPR036390">
    <property type="entry name" value="WH_DNA-bd_sf"/>
</dbReference>
<dbReference type="PANTHER" id="PTHR12716:SF8">
    <property type="entry name" value="TRANSCRIPTION INITIATION FACTOR IIE SUBUNIT BETA"/>
    <property type="match status" value="1"/>
</dbReference>
<dbReference type="PANTHER" id="PTHR12716">
    <property type="entry name" value="TRANSCRIPTION INITIATION FACTOR IIE, BETA SUBUNIT"/>
    <property type="match status" value="1"/>
</dbReference>
<dbReference type="Pfam" id="PF18121">
    <property type="entry name" value="TFA2_Winged_2"/>
    <property type="match status" value="1"/>
</dbReference>
<dbReference type="Pfam" id="PF02186">
    <property type="entry name" value="TFIIE_beta"/>
    <property type="match status" value="1"/>
</dbReference>
<dbReference type="PIRSF" id="PIRSF016398">
    <property type="entry name" value="TFIIE-beta"/>
    <property type="match status" value="1"/>
</dbReference>
<dbReference type="SUPFAM" id="SSF46785">
    <property type="entry name" value="Winged helix' DNA-binding domain"/>
    <property type="match status" value="1"/>
</dbReference>
<dbReference type="PROSITE" id="PS51351">
    <property type="entry name" value="TFIIE_BETA_C"/>
    <property type="match status" value="1"/>
</dbReference>
<organism>
    <name type="scientific">Xenopus laevis</name>
    <name type="common">African clawed frog</name>
    <dbReference type="NCBI Taxonomy" id="8355"/>
    <lineage>
        <taxon>Eukaryota</taxon>
        <taxon>Metazoa</taxon>
        <taxon>Chordata</taxon>
        <taxon>Craniata</taxon>
        <taxon>Vertebrata</taxon>
        <taxon>Euteleostomi</taxon>
        <taxon>Amphibia</taxon>
        <taxon>Batrachia</taxon>
        <taxon>Anura</taxon>
        <taxon>Pipoidea</taxon>
        <taxon>Pipidae</taxon>
        <taxon>Xenopodinae</taxon>
        <taxon>Xenopus</taxon>
        <taxon>Xenopus</taxon>
    </lineage>
</organism>
<proteinExistence type="evidence at transcript level"/>
<comment type="function">
    <text evidence="1">Recruits TFIIH to the initiation complex and stimulates the RNA polymerase II C-terminal domain kinase and DNA-dependent ATPase activities of TFIIH. Both TFIIH and TFIIE are required for promoter clearance by RNA polymerase.</text>
</comment>
<comment type="subunit">
    <text>Tetramer of two alpha and two beta chains.</text>
</comment>
<comment type="subcellular location">
    <subcellularLocation>
        <location evidence="2">Nucleus</location>
    </subcellularLocation>
</comment>
<comment type="similarity">
    <text evidence="2">Belongs to the TFIIE beta subunit family.</text>
</comment>
<accession>P29540</accession>
<accession>Q5FWM0</accession>
<protein>
    <recommendedName>
        <fullName>General transcription factor IIE subunit 2</fullName>
    </recommendedName>
    <alternativeName>
        <fullName>Transcription initiation factor IIE subunit beta</fullName>
        <shortName>TFIIE-beta</shortName>
    </alternativeName>
</protein>
<reference key="1">
    <citation type="journal article" date="1992" name="Nucleic Acids Res.">
        <title>Structural conservation of putative functional motifs between Xenopus and human TFIIE-beta.</title>
        <authorList>
            <person name="Ohkuma Y."/>
            <person name="Hashimoto S."/>
            <person name="Roeder R.G."/>
            <person name="Horikoshi M."/>
        </authorList>
    </citation>
    <scope>NUCLEOTIDE SEQUENCE [GENOMIC DNA]</scope>
    <source>
        <tissue>Oocyte</tissue>
    </source>
</reference>
<reference key="2">
    <citation type="submission" date="2005-01" db="EMBL/GenBank/DDBJ databases">
        <authorList>
            <consortium name="NIH - Xenopus Gene Collection (XGC) project"/>
        </authorList>
    </citation>
    <scope>NUCLEOTIDE SEQUENCE [LARGE SCALE MRNA]</scope>
    <source>
        <tissue>Egg</tissue>
    </source>
</reference>
<evidence type="ECO:0000250" key="1">
    <source>
        <dbReference type="UniProtKB" id="P29084"/>
    </source>
</evidence>
<evidence type="ECO:0000255" key="2">
    <source>
        <dbReference type="PROSITE-ProRule" id="PRU00682"/>
    </source>
</evidence>
<evidence type="ECO:0000256" key="3">
    <source>
        <dbReference type="SAM" id="MobiDB-lite"/>
    </source>
</evidence>